<keyword id="KW-0002">3D-structure</keyword>
<keyword id="KW-0007">Acetylation</keyword>
<keyword id="KW-0067">ATP-binding</keyword>
<keyword id="KW-0963">Cytoplasm</keyword>
<keyword id="KW-0903">Direct protein sequencing</keyword>
<keyword id="KW-0418">Kinase</keyword>
<keyword id="KW-0496">Mitochondrion</keyword>
<keyword id="KW-0547">Nucleotide-binding</keyword>
<keyword id="KW-1185">Reference proteome</keyword>
<keyword id="KW-0808">Transferase</keyword>
<sequence>MSSSESIRMVLIGPPGAGKGTQAPNLQERFHAAHLATGDMLRSQIAKGTQLGLEAKKIMDQGGLVSDDIMVNMIKDELTNNPACKNGFILDGFPRTIPQAEKLDQMLKEQGTPLEKAIELKVDDELLVARITGRLIHPASGRSYHKIFNPPKEDMKDDVTGEALVQRSDDNADALKKRLAAYHAQTEPIVDFYKKTGIWAGVDASQPPATVWADILNKLGKD</sequence>
<proteinExistence type="evidence at protein level"/>
<feature type="initiator methionine" description="Removed" evidence="17">
    <location>
        <position position="1"/>
    </location>
</feature>
<feature type="propeptide" id="PRO_0000016550" description="Removed in mature form" evidence="1 9">
    <location>
        <position position="2"/>
    </location>
</feature>
<feature type="chain" id="PRO_0000016551" description="Adenylate kinase">
    <location>
        <begin position="3"/>
        <end position="222"/>
    </location>
</feature>
<feature type="region of interest" description="NMP" evidence="1 10 11">
    <location>
        <begin position="36"/>
        <end position="65"/>
    </location>
</feature>
<feature type="region of interest" description="LID" evidence="1 10 11">
    <location>
        <begin position="133"/>
        <end position="170"/>
    </location>
</feature>
<feature type="binding site" evidence="1 10 11 12">
    <location>
        <begin position="16"/>
        <end position="21"/>
    </location>
    <ligand>
        <name>ATP</name>
        <dbReference type="ChEBI" id="CHEBI:30616"/>
    </ligand>
</feature>
<feature type="binding site" evidence="1 10 11">
    <location>
        <position position="37"/>
    </location>
    <ligand>
        <name>AMP</name>
        <dbReference type="ChEBI" id="CHEBI:456215"/>
    </ligand>
</feature>
<feature type="binding site" evidence="1 10 11">
    <location>
        <position position="42"/>
    </location>
    <ligand>
        <name>AMP</name>
        <dbReference type="ChEBI" id="CHEBI:456215"/>
    </ligand>
</feature>
<feature type="binding site" evidence="1 10 11">
    <location>
        <begin position="63"/>
        <end position="65"/>
    </location>
    <ligand>
        <name>AMP</name>
        <dbReference type="ChEBI" id="CHEBI:456215"/>
    </ligand>
</feature>
<feature type="binding site" evidence="1 10 11">
    <location>
        <begin position="92"/>
        <end position="95"/>
    </location>
    <ligand>
        <name>AMP</name>
        <dbReference type="ChEBI" id="CHEBI:456215"/>
    </ligand>
</feature>
<feature type="binding site" evidence="1 10 11">
    <location>
        <position position="99"/>
    </location>
    <ligand>
        <name>AMP</name>
        <dbReference type="ChEBI" id="CHEBI:456215"/>
    </ligand>
</feature>
<feature type="binding site" evidence="1 10 11 12">
    <location>
        <position position="134"/>
    </location>
    <ligand>
        <name>ATP</name>
        <dbReference type="ChEBI" id="CHEBI:30616"/>
    </ligand>
</feature>
<feature type="binding site" evidence="10 11 12">
    <location>
        <begin position="143"/>
        <end position="144"/>
    </location>
    <ligand>
        <name>ATP</name>
        <dbReference type="ChEBI" id="CHEBI:30616"/>
    </ligand>
</feature>
<feature type="binding site" evidence="1 10 11">
    <location>
        <position position="167"/>
    </location>
    <ligand>
        <name>AMP</name>
        <dbReference type="ChEBI" id="CHEBI:456215"/>
    </ligand>
</feature>
<feature type="binding site" evidence="1 10 11">
    <location>
        <position position="178"/>
    </location>
    <ligand>
        <name>AMP</name>
        <dbReference type="ChEBI" id="CHEBI:456215"/>
    </ligand>
</feature>
<feature type="binding site" evidence="1 10 11 12">
    <location>
        <position position="206"/>
    </location>
    <ligand>
        <name>ATP</name>
        <dbReference type="ChEBI" id="CHEBI:30616"/>
    </ligand>
</feature>
<feature type="modified residue" description="N-acetylserine" evidence="17">
    <location>
        <position position="2"/>
    </location>
</feature>
<feature type="modified residue" description="N-acetylserine" evidence="1 9">
    <location>
        <position position="3"/>
    </location>
</feature>
<feature type="sequence conflict" description="In Ref. 7; AAS56904." evidence="13" ref="7">
    <original>R</original>
    <variation>K</variation>
    <location>
        <position position="95"/>
    </location>
</feature>
<feature type="sequence conflict" description="In Ref. 2; CAA68471." evidence="13" ref="2">
    <original>A</original>
    <variation>R</variation>
    <location>
        <position position="139"/>
    </location>
</feature>
<feature type="sequence conflict" description="In Ref. 8; AA sequence." evidence="13" ref="8">
    <original>D</original>
    <variation>N</variation>
    <location>
        <position position="222"/>
    </location>
</feature>
<feature type="strand" evidence="18">
    <location>
        <begin position="8"/>
        <end position="12"/>
    </location>
</feature>
<feature type="helix" evidence="18">
    <location>
        <begin position="19"/>
        <end position="30"/>
    </location>
</feature>
<feature type="strand" evidence="18">
    <location>
        <begin position="33"/>
        <end position="36"/>
    </location>
</feature>
<feature type="helix" evidence="18">
    <location>
        <begin position="37"/>
        <end position="46"/>
    </location>
</feature>
<feature type="helix" evidence="18">
    <location>
        <begin position="50"/>
        <end position="60"/>
    </location>
</feature>
<feature type="helix" evidence="18">
    <location>
        <begin position="67"/>
        <end position="80"/>
    </location>
</feature>
<feature type="helix" evidence="18">
    <location>
        <begin position="82"/>
        <end position="85"/>
    </location>
</feature>
<feature type="strand" evidence="18">
    <location>
        <begin position="88"/>
        <end position="92"/>
    </location>
</feature>
<feature type="helix" evidence="18">
    <location>
        <begin position="97"/>
        <end position="110"/>
    </location>
</feature>
<feature type="strand" evidence="18">
    <location>
        <begin position="116"/>
        <end position="121"/>
    </location>
</feature>
<feature type="helix" evidence="18">
    <location>
        <begin position="124"/>
        <end position="132"/>
    </location>
</feature>
<feature type="strand" evidence="18">
    <location>
        <begin position="134"/>
        <end position="136"/>
    </location>
</feature>
<feature type="turn" evidence="18">
    <location>
        <begin position="138"/>
        <end position="140"/>
    </location>
</feature>
<feature type="strand" evidence="18">
    <location>
        <begin position="143"/>
        <end position="145"/>
    </location>
</feature>
<feature type="turn" evidence="18">
    <location>
        <begin position="146"/>
        <end position="148"/>
    </location>
</feature>
<feature type="turn" evidence="18">
    <location>
        <begin position="158"/>
        <end position="160"/>
    </location>
</feature>
<feature type="helix" evidence="18">
    <location>
        <begin position="172"/>
        <end position="185"/>
    </location>
</feature>
<feature type="helix" evidence="18">
    <location>
        <begin position="188"/>
        <end position="195"/>
    </location>
</feature>
<feature type="strand" evidence="18">
    <location>
        <begin position="199"/>
        <end position="203"/>
    </location>
</feature>
<feature type="helix" evidence="18">
    <location>
        <begin position="208"/>
        <end position="219"/>
    </location>
</feature>
<gene>
    <name evidence="1" type="primary">ADK1</name>
    <name type="synonym">AKY</name>
    <name type="synonym">AKY1</name>
    <name type="synonym">AKY2</name>
    <name type="ordered locus">YDR226W</name>
    <name type="ORF">YD9934.11</name>
</gene>
<evidence type="ECO:0000255" key="1">
    <source>
        <dbReference type="HAMAP-Rule" id="MF_03168"/>
    </source>
</evidence>
<evidence type="ECO:0000269" key="2">
    <source>
    </source>
</evidence>
<evidence type="ECO:0000269" key="3">
    <source>
    </source>
</evidence>
<evidence type="ECO:0000269" key="4">
    <source>
    </source>
</evidence>
<evidence type="ECO:0000269" key="5">
    <source>
    </source>
</evidence>
<evidence type="ECO:0000269" key="6">
    <source>
    </source>
</evidence>
<evidence type="ECO:0000269" key="7">
    <source>
    </source>
</evidence>
<evidence type="ECO:0000269" key="8">
    <source>
    </source>
</evidence>
<evidence type="ECO:0000269" key="9">
    <source>
    </source>
</evidence>
<evidence type="ECO:0000269" key="10">
    <source>
    </source>
</evidence>
<evidence type="ECO:0000269" key="11">
    <source>
    </source>
</evidence>
<evidence type="ECO:0000269" key="12">
    <source>
    </source>
</evidence>
<evidence type="ECO:0000305" key="13"/>
<evidence type="ECO:0000305" key="14">
    <source>
    </source>
</evidence>
<evidence type="ECO:0000305" key="15">
    <source>
    </source>
</evidence>
<evidence type="ECO:0000305" key="16">
    <source>
    </source>
</evidence>
<evidence type="ECO:0007744" key="17">
    <source>
    </source>
</evidence>
<evidence type="ECO:0007829" key="18">
    <source>
        <dbReference type="PDB" id="1AKY"/>
    </source>
</evidence>
<organism>
    <name type="scientific">Saccharomyces cerevisiae (strain ATCC 204508 / S288c)</name>
    <name type="common">Baker's yeast</name>
    <dbReference type="NCBI Taxonomy" id="559292"/>
    <lineage>
        <taxon>Eukaryota</taxon>
        <taxon>Fungi</taxon>
        <taxon>Dikarya</taxon>
        <taxon>Ascomycota</taxon>
        <taxon>Saccharomycotina</taxon>
        <taxon>Saccharomycetes</taxon>
        <taxon>Saccharomycetales</taxon>
        <taxon>Saccharomycetaceae</taxon>
        <taxon>Saccharomyces</taxon>
    </lineage>
</organism>
<reference key="1">
    <citation type="journal article" date="1987" name="Curr. Genet.">
        <title>The complete nucleotide sequence of the gene coding for yeast adenylate kinase.</title>
        <authorList>
            <person name="Magdolen V."/>
            <person name="Oechsner U."/>
            <person name="Bandlow W."/>
        </authorList>
    </citation>
    <scope>NUCLEOTIDE SEQUENCE [GENOMIC DNA]</scope>
</reference>
<reference key="2">
    <citation type="journal article" date="1987" name="Nucleic Acids Res.">
        <title>The cDNA sequence encoding cytosolic adenylate kinase from baker's yeast (Saccharomyces cerevisiae).</title>
        <authorList>
            <person name="Proba K."/>
            <person name="Tomasselli A.G."/>
            <person name="Nielsen P."/>
            <person name="Schulz G.E."/>
        </authorList>
    </citation>
    <scope>NUCLEOTIDE SEQUENCE [MRNA]</scope>
</reference>
<reference key="3">
    <citation type="journal article" date="1988" name="J. Biol. Chem.">
        <title>Analysis and in vivo disruption of the gene coding for adenylate kinase (ADK1) in the yeast Saccharomyces cerevisiae.</title>
        <authorList>
            <person name="Konrad M."/>
        </authorList>
    </citation>
    <scope>NUCLEOTIDE SEQUENCE [GENOMIC DNA]</scope>
    <scope>FUNCTION</scope>
</reference>
<reference key="4">
    <citation type="journal article" date="1995" name="Nucleic Acids Res.">
        <title>Insertion site specificity of the transposon Tn3.</title>
        <authorList>
            <person name="Davies C.J."/>
            <person name="Hutchison C.A. III"/>
        </authorList>
    </citation>
    <scope>NUCLEOTIDE SEQUENCE [GENOMIC DNA]</scope>
</reference>
<reference key="5">
    <citation type="journal article" date="1997" name="Nature">
        <title>The nucleotide sequence of Saccharomyces cerevisiae chromosome IV.</title>
        <authorList>
            <person name="Jacq C."/>
            <person name="Alt-Moerbe J."/>
            <person name="Andre B."/>
            <person name="Arnold W."/>
            <person name="Bahr A."/>
            <person name="Ballesta J.P.G."/>
            <person name="Bargues M."/>
            <person name="Baron L."/>
            <person name="Becker A."/>
            <person name="Biteau N."/>
            <person name="Bloecker H."/>
            <person name="Blugeon C."/>
            <person name="Boskovic J."/>
            <person name="Brandt P."/>
            <person name="Brueckner M."/>
            <person name="Buitrago M.J."/>
            <person name="Coster F."/>
            <person name="Delaveau T."/>
            <person name="del Rey F."/>
            <person name="Dujon B."/>
            <person name="Eide L.G."/>
            <person name="Garcia-Cantalejo J.M."/>
            <person name="Goffeau A."/>
            <person name="Gomez-Peris A."/>
            <person name="Granotier C."/>
            <person name="Hanemann V."/>
            <person name="Hankeln T."/>
            <person name="Hoheisel J.D."/>
            <person name="Jaeger W."/>
            <person name="Jimenez A."/>
            <person name="Jonniaux J.-L."/>
            <person name="Kraemer C."/>
            <person name="Kuester H."/>
            <person name="Laamanen P."/>
            <person name="Legros Y."/>
            <person name="Louis E.J."/>
            <person name="Moeller-Rieker S."/>
            <person name="Monnet A."/>
            <person name="Moro M."/>
            <person name="Mueller-Auer S."/>
            <person name="Nussbaumer B."/>
            <person name="Paricio N."/>
            <person name="Paulin L."/>
            <person name="Perea J."/>
            <person name="Perez-Alonso M."/>
            <person name="Perez-Ortin J.E."/>
            <person name="Pohl T.M."/>
            <person name="Prydz H."/>
            <person name="Purnelle B."/>
            <person name="Rasmussen S.W."/>
            <person name="Remacha M.A."/>
            <person name="Revuelta J.L."/>
            <person name="Rieger M."/>
            <person name="Salom D."/>
            <person name="Saluz H.P."/>
            <person name="Saiz J.E."/>
            <person name="Saren A.-M."/>
            <person name="Schaefer M."/>
            <person name="Scharfe M."/>
            <person name="Schmidt E.R."/>
            <person name="Schneider C."/>
            <person name="Scholler P."/>
            <person name="Schwarz S."/>
            <person name="Soler-Mira A."/>
            <person name="Urrestarazu L.A."/>
            <person name="Verhasselt P."/>
            <person name="Vissers S."/>
            <person name="Voet M."/>
            <person name="Volckaert G."/>
            <person name="Wagner G."/>
            <person name="Wambutt R."/>
            <person name="Wedler E."/>
            <person name="Wedler H."/>
            <person name="Woelfl S."/>
            <person name="Harris D.E."/>
            <person name="Bowman S."/>
            <person name="Brown D."/>
            <person name="Churcher C.M."/>
            <person name="Connor R."/>
            <person name="Dedman K."/>
            <person name="Gentles S."/>
            <person name="Hamlin N."/>
            <person name="Hunt S."/>
            <person name="Jones L."/>
            <person name="McDonald S."/>
            <person name="Murphy L.D."/>
            <person name="Niblett D."/>
            <person name="Odell C."/>
            <person name="Oliver K."/>
            <person name="Rajandream M.A."/>
            <person name="Richards C."/>
            <person name="Shore L."/>
            <person name="Walsh S.V."/>
            <person name="Barrell B.G."/>
            <person name="Dietrich F.S."/>
            <person name="Mulligan J.T."/>
            <person name="Allen E."/>
            <person name="Araujo R."/>
            <person name="Aviles E."/>
            <person name="Berno A."/>
            <person name="Carpenter J."/>
            <person name="Chen E."/>
            <person name="Cherry J.M."/>
            <person name="Chung E."/>
            <person name="Duncan M."/>
            <person name="Hunicke-Smith S."/>
            <person name="Hyman R.W."/>
            <person name="Komp C."/>
            <person name="Lashkari D."/>
            <person name="Lew H."/>
            <person name="Lin D."/>
            <person name="Mosedale D."/>
            <person name="Nakahara K."/>
            <person name="Namath A."/>
            <person name="Oefner P."/>
            <person name="Oh C."/>
            <person name="Petel F.X."/>
            <person name="Roberts D."/>
            <person name="Schramm S."/>
            <person name="Schroeder M."/>
            <person name="Shogren T."/>
            <person name="Shroff N."/>
            <person name="Winant A."/>
            <person name="Yelton M.A."/>
            <person name="Botstein D."/>
            <person name="Davis R.W."/>
            <person name="Johnston M."/>
            <person name="Andrews S."/>
            <person name="Brinkman R."/>
            <person name="Cooper J."/>
            <person name="Ding H."/>
            <person name="Du Z."/>
            <person name="Favello A."/>
            <person name="Fulton L."/>
            <person name="Gattung S."/>
            <person name="Greco T."/>
            <person name="Hallsworth K."/>
            <person name="Hawkins J."/>
            <person name="Hillier L.W."/>
            <person name="Jier M."/>
            <person name="Johnson D."/>
            <person name="Johnston L."/>
            <person name="Kirsten J."/>
            <person name="Kucaba T."/>
            <person name="Langston Y."/>
            <person name="Latreille P."/>
            <person name="Le T."/>
            <person name="Mardis E."/>
            <person name="Menezes S."/>
            <person name="Miller N."/>
            <person name="Nhan M."/>
            <person name="Pauley A."/>
            <person name="Peluso D."/>
            <person name="Rifkin L."/>
            <person name="Riles L."/>
            <person name="Taich A."/>
            <person name="Trevaskis E."/>
            <person name="Vignati D."/>
            <person name="Wilcox L."/>
            <person name="Wohldman P."/>
            <person name="Vaudin M."/>
            <person name="Wilson R."/>
            <person name="Waterston R."/>
            <person name="Albermann K."/>
            <person name="Hani J."/>
            <person name="Heumann K."/>
            <person name="Kleine K."/>
            <person name="Mewes H.-W."/>
            <person name="Zollner A."/>
            <person name="Zaccaria P."/>
        </authorList>
    </citation>
    <scope>NUCLEOTIDE SEQUENCE [LARGE SCALE GENOMIC DNA]</scope>
    <source>
        <strain>ATCC 204508 / S288c</strain>
    </source>
</reference>
<reference key="6">
    <citation type="journal article" date="2014" name="G3 (Bethesda)">
        <title>The reference genome sequence of Saccharomyces cerevisiae: Then and now.</title>
        <authorList>
            <person name="Engel S.R."/>
            <person name="Dietrich F.S."/>
            <person name="Fisk D.G."/>
            <person name="Binkley G."/>
            <person name="Balakrishnan R."/>
            <person name="Costanzo M.C."/>
            <person name="Dwight S.S."/>
            <person name="Hitz B.C."/>
            <person name="Karra K."/>
            <person name="Nash R.S."/>
            <person name="Weng S."/>
            <person name="Wong E.D."/>
            <person name="Lloyd P."/>
            <person name="Skrzypek M.S."/>
            <person name="Miyasato S.R."/>
            <person name="Simison M."/>
            <person name="Cherry J.M."/>
        </authorList>
    </citation>
    <scope>GENOME REANNOTATION</scope>
    <source>
        <strain>ATCC 204508 / S288c</strain>
    </source>
</reference>
<reference key="7">
    <citation type="journal article" date="2007" name="Genome Res.">
        <title>Approaching a complete repository of sequence-verified protein-encoding clones for Saccharomyces cerevisiae.</title>
        <authorList>
            <person name="Hu Y."/>
            <person name="Rolfs A."/>
            <person name="Bhullar B."/>
            <person name="Murthy T.V.S."/>
            <person name="Zhu C."/>
            <person name="Berger M.F."/>
            <person name="Camargo A.A."/>
            <person name="Kelley F."/>
            <person name="McCarron S."/>
            <person name="Jepson D."/>
            <person name="Richardson A."/>
            <person name="Raphael J."/>
            <person name="Moreira D."/>
            <person name="Taycher E."/>
            <person name="Zuo D."/>
            <person name="Mohr S."/>
            <person name="Kane M.F."/>
            <person name="Williamson J."/>
            <person name="Simpson A.J.G."/>
            <person name="Bulyk M.L."/>
            <person name="Harlow E."/>
            <person name="Marsischky G."/>
            <person name="Kolodner R.D."/>
            <person name="LaBaer J."/>
        </authorList>
    </citation>
    <scope>NUCLEOTIDE SEQUENCE [GENOMIC DNA]</scope>
    <source>
        <strain>ATCC 204508 / S288c</strain>
    </source>
</reference>
<reference key="8">
    <citation type="journal article" date="1986" name="Eur. J. Biochem.">
        <title>The complete amino acid sequence of adenylate kinase from baker's yeast.</title>
        <authorList>
            <person name="Tomasselli A.G."/>
            <person name="Mast E."/>
            <person name="Janes W."/>
            <person name="Schiltz E."/>
        </authorList>
    </citation>
    <scope>PROTEIN SEQUENCE OF 3-222</scope>
    <scope>ACETYLATION AT SER-3</scope>
</reference>
<reference key="9">
    <citation type="journal article" date="1988" name="Eur. J. Biochem.">
        <title>Yeast adenylate kinase is active simultaneously in mitochondria and cytoplasm and is required for non-fermentative growth.</title>
        <authorList>
            <person name="Bandlow W."/>
            <person name="Strobel G."/>
            <person name="Zoglowek C."/>
            <person name="Oechsner U."/>
            <person name="Magdolen V."/>
        </authorList>
    </citation>
    <scope>FUNCTION</scope>
    <scope>CATALYTIC ACTIVITY</scope>
    <scope>SUBCELLULAR LOCATION</scope>
    <scope>DISRUPTION PHENOTYPE</scope>
</reference>
<reference key="10">
    <citation type="journal article" date="2002" name="J. Biol. Chem.">
        <title>Redundant mitochondrial targeting signals in yeast adenylate kinase.</title>
        <authorList>
            <person name="Schricker R."/>
            <person name="Angermayr M."/>
            <person name="Strobel G."/>
            <person name="Klinke S."/>
            <person name="Korber D."/>
            <person name="Bandlow W."/>
        </authorList>
    </citation>
    <scope>SUBCELLULAR LOCATION</scope>
</reference>
<reference key="11">
    <citation type="journal article" date="2003" name="Nature">
        <title>Global analysis of protein expression in yeast.</title>
        <authorList>
            <person name="Ghaemmaghami S."/>
            <person name="Huh W.-K."/>
            <person name="Bower K."/>
            <person name="Howson R.W."/>
            <person name="Belle A."/>
            <person name="Dephoure N."/>
            <person name="O'Shea E.K."/>
            <person name="Weissman J.S."/>
        </authorList>
    </citation>
    <scope>LEVEL OF PROTEIN EXPRESSION [LARGE SCALE ANALYSIS]</scope>
</reference>
<reference key="12">
    <citation type="journal article" date="2006" name="J. Proteome Res.">
        <title>Toward the complete yeast mitochondrial proteome: multidimensional separation techniques for mitochondrial proteomics.</title>
        <authorList>
            <person name="Reinders J."/>
            <person name="Zahedi R.P."/>
            <person name="Pfanner N."/>
            <person name="Meisinger C."/>
            <person name="Sickmann A."/>
        </authorList>
    </citation>
    <scope>SUBCELLULAR LOCATION [LARGE SCALE ANALYSIS]</scope>
    <scope>IDENTIFICATION BY MASS SPECTROMETRY</scope>
</reference>
<reference key="13">
    <citation type="journal article" date="2008" name="Mol. Microbiol.">
        <title>Co-regulation of yeast purine and phosphate pathways in response to adenylic nucleotide variations.</title>
        <authorList>
            <person name="Gauthier S."/>
            <person name="Coulpier F."/>
            <person name="Jourdren L."/>
            <person name="Merle M."/>
            <person name="Beck S."/>
            <person name="Konrad M."/>
            <person name="Daignan-Fornier B."/>
            <person name="Pinson B."/>
        </authorList>
    </citation>
    <scope>FUNCTION</scope>
</reference>
<reference key="14">
    <citation type="journal article" date="2012" name="Mol. Cell. Proteomics">
        <title>Intermembrane space proteome of yeast mitochondria.</title>
        <authorList>
            <person name="Voegtle F.N."/>
            <person name="Burkhart J.M."/>
            <person name="Rao S."/>
            <person name="Gerbeth C."/>
            <person name="Hinrichs J."/>
            <person name="Martinou J.C."/>
            <person name="Chacinska A."/>
            <person name="Sickmann A."/>
            <person name="Zahedi R.P."/>
            <person name="Meisinger C."/>
        </authorList>
    </citation>
    <scope>IDENTIFICATION BY MASS SPECTROMETRY</scope>
    <scope>SUBCELLULAR LOCATION [LARGE SCALE ANALYSIS]</scope>
</reference>
<reference key="15">
    <citation type="journal article" date="2012" name="Proc. Natl. Acad. Sci. U.S.A.">
        <title>N-terminal acetylome analyses and functional insights of the N-terminal acetyltransferase NatB.</title>
        <authorList>
            <person name="Van Damme P."/>
            <person name="Lasa M."/>
            <person name="Polevoda B."/>
            <person name="Gazquez C."/>
            <person name="Elosegui-Artola A."/>
            <person name="Kim D.S."/>
            <person name="De Juan-Pardo E."/>
            <person name="Demeyer K."/>
            <person name="Hole K."/>
            <person name="Larrea E."/>
            <person name="Timmerman E."/>
            <person name="Prieto J."/>
            <person name="Arnesen T."/>
            <person name="Sherman F."/>
            <person name="Gevaert K."/>
            <person name="Aldabe R."/>
        </authorList>
    </citation>
    <scope>ACETYLATION [LARGE SCALE ANALYSIS] AT SER-2</scope>
    <scope>CLEAVAGE OF INITIATOR METHIONINE [LARGE SCALE ANALYSIS]</scope>
    <scope>IDENTIFICATION BY MASS SPECTROMETRY [LARGE SCALE ANALYSIS]</scope>
</reference>
<reference key="16">
    <citation type="journal article" date="1995" name="Eur. J. Biochem.">
        <title>Stability, activity and structure of adenylate kinase mutants.</title>
        <authorList>
            <person name="Spuergin P."/>
            <person name="Abele U."/>
            <person name="Schulz G.E."/>
        </authorList>
    </citation>
    <scope>X-RAY CRYSTALLOGRAPHY (2.23 ANGSTROMS) OF 3-221 IN COMPLEX WITH BI-SUBSTRATE ANALOG AP5A</scope>
</reference>
<reference key="17">
    <citation type="journal article" date="1995" name="Protein Sci.">
        <title>High-resolution structures of adenylate kinase from yeast ligated with inhibitor Ap5A, showing the pathway of phosphoryl transfer.</title>
        <authorList>
            <person name="Abele U."/>
            <person name="Schulz G.E."/>
        </authorList>
    </citation>
    <scope>X-RAY CRYSTALLOGRAPHY (1.63 ANGSTROMS) IN COMPLEX WITH BI-SUBSTRATE ANALOG AP5A</scope>
</reference>
<reference key="18">
    <citation type="journal article" date="1996" name="J. Mol. Biol.">
        <title>Structure of a mutant adenylate kinase ligated with an ATP-analogue showing domain closure over ATP.</title>
        <authorList>
            <person name="Schlauderer G.J."/>
            <person name="Proba K."/>
            <person name="Schulz G.E."/>
        </authorList>
    </citation>
    <scope>X-RAY CRYSTALLOGRAPHY (2.36 ANGSTROMS) OF 3-221 IN COMPLEX WITH ATP ANALOG</scope>
</reference>
<protein>
    <recommendedName>
        <fullName evidence="1">Adenylate kinase</fullName>
        <ecNumber evidence="1">2.7.4.3</ecNumber>
    </recommendedName>
    <alternativeName>
        <fullName evidence="1">ATP-AMP transphosphorylase</fullName>
    </alternativeName>
    <alternativeName>
        <fullName evidence="1">ATP:AMP phosphotransferase</fullName>
    </alternativeName>
    <alternativeName>
        <fullName evidence="1">Adenylate kinase cytosolic and mitochondrial</fullName>
    </alternativeName>
    <alternativeName>
        <fullName evidence="1">Adenylate monophosphate kinase</fullName>
    </alternativeName>
</protein>
<accession>P07170</accession>
<accession>D6VSK8</accession>
<accession>Q6Q539</accession>
<comment type="function">
    <text evidence="1 5 7 8">Catalyzes the reversible transfer of the terminal phosphate group between ATP and AMP. Plays an important role in cellular energy homeostasis and in adenine nucleotide metabolism. Adenylate kinase activity is critical for regulation of the phosphate utilization and the AMP de novo biosynthesis pathways.</text>
</comment>
<comment type="catalytic activity">
    <reaction evidence="1 8">
        <text>AMP + ATP = 2 ADP</text>
        <dbReference type="Rhea" id="RHEA:12973"/>
        <dbReference type="ChEBI" id="CHEBI:30616"/>
        <dbReference type="ChEBI" id="CHEBI:456215"/>
        <dbReference type="ChEBI" id="CHEBI:456216"/>
        <dbReference type="EC" id="2.7.4.3"/>
    </reaction>
</comment>
<comment type="subunit">
    <text evidence="1 10 11 12">Monomer.</text>
</comment>
<comment type="subcellular location">
    <subcellularLocation>
        <location evidence="1 2 8">Cytoplasm</location>
        <location evidence="1 2 8">Cytosol</location>
    </subcellularLocation>
    <subcellularLocation>
        <location evidence="1 2 4 6 8">Mitochondrion intermembrane space</location>
    </subcellularLocation>
    <text evidence="8">90% cytoplasmic, 10% mitochondrial.</text>
</comment>
<comment type="domain">
    <text evidence="1 14 15 16">Consists of three domains, a large central CORE domain and two small peripheral domains, NMPbind and LID, which undergo movements during catalysis. The LID domain closes over the site of phosphoryl transfer upon ATP binding. Assembling and dissambling the active center during each catalytic cycle provides an effective means to prevent ATP hydrolysis.</text>
</comment>
<comment type="disruption phenotype">
    <text evidence="8">The phenotype of disruption mutants is pet, showing that complementation by another adenylate kinase isozyme occurs only under fermentative conditions. The disruption completely destroys the activity in mitochondria, whereas in the cytoplasmic fraction about 10% is retained.</text>
</comment>
<comment type="miscellaneous">
    <text evidence="3">Present with 123000 molecules/cell in log phase SD medium.</text>
</comment>
<comment type="similarity">
    <text evidence="1">Belongs to the adenylate kinase family. AK2 subfamily.</text>
</comment>
<name>KAD2_YEAST</name>
<dbReference type="EC" id="2.7.4.3" evidence="1"/>
<dbReference type="EMBL" id="X06304">
    <property type="protein sequence ID" value="CAA29624.1"/>
    <property type="molecule type" value="Genomic_DNA"/>
</dbReference>
<dbReference type="EMBL" id="Y00413">
    <property type="protein sequence ID" value="CAA68471.1"/>
    <property type="molecule type" value="mRNA"/>
</dbReference>
<dbReference type="EMBL" id="M18455">
    <property type="protein sequence ID" value="AAA66319.1"/>
    <property type="molecule type" value="Genomic_DNA"/>
</dbReference>
<dbReference type="EMBL" id="U13239">
    <property type="protein sequence ID" value="AAC33143.1"/>
    <property type="molecule type" value="Genomic_DNA"/>
</dbReference>
<dbReference type="EMBL" id="Z48612">
    <property type="protein sequence ID" value="CAA88506.1"/>
    <property type="molecule type" value="Genomic_DNA"/>
</dbReference>
<dbReference type="EMBL" id="AY558578">
    <property type="protein sequence ID" value="AAS56904.1"/>
    <property type="molecule type" value="Genomic_DNA"/>
</dbReference>
<dbReference type="EMBL" id="BK006938">
    <property type="protein sequence ID" value="DAA12068.1"/>
    <property type="molecule type" value="Genomic_DNA"/>
</dbReference>
<dbReference type="PIR" id="S05799">
    <property type="entry name" value="KIBYA"/>
</dbReference>
<dbReference type="RefSeq" id="NP_010512.1">
    <property type="nucleotide sequence ID" value="NM_001180534.1"/>
</dbReference>
<dbReference type="PDB" id="1AKY">
    <property type="method" value="X-ray"/>
    <property type="resolution" value="1.63 A"/>
    <property type="chains" value="A=3-221"/>
</dbReference>
<dbReference type="PDB" id="1DVR">
    <property type="method" value="X-ray"/>
    <property type="resolution" value="2.36 A"/>
    <property type="chains" value="A/B=3-221"/>
</dbReference>
<dbReference type="PDB" id="2AKY">
    <property type="method" value="X-ray"/>
    <property type="resolution" value="1.96 A"/>
    <property type="chains" value="A=3-221"/>
</dbReference>
<dbReference type="PDB" id="3AKY">
    <property type="method" value="X-ray"/>
    <property type="resolution" value="2.23 A"/>
    <property type="chains" value="A=3-221"/>
</dbReference>
<dbReference type="PDBsum" id="1AKY"/>
<dbReference type="PDBsum" id="1DVR"/>
<dbReference type="PDBsum" id="2AKY"/>
<dbReference type="PDBsum" id="3AKY"/>
<dbReference type="SMR" id="P07170"/>
<dbReference type="BioGRID" id="32278">
    <property type="interactions" value="125"/>
</dbReference>
<dbReference type="DIP" id="DIP-5129N"/>
<dbReference type="FunCoup" id="P07170">
    <property type="interactions" value="1070"/>
</dbReference>
<dbReference type="IntAct" id="P07170">
    <property type="interactions" value="33"/>
</dbReference>
<dbReference type="MINT" id="P07170"/>
<dbReference type="STRING" id="4932.YDR226W"/>
<dbReference type="iPTMnet" id="P07170"/>
<dbReference type="PaxDb" id="4932-YDR226W"/>
<dbReference type="PeptideAtlas" id="P07170"/>
<dbReference type="TopDownProteomics" id="P07170"/>
<dbReference type="EnsemblFungi" id="YDR226W_mRNA">
    <property type="protein sequence ID" value="YDR226W"/>
    <property type="gene ID" value="YDR226W"/>
</dbReference>
<dbReference type="GeneID" id="851812"/>
<dbReference type="KEGG" id="sce:YDR226W"/>
<dbReference type="AGR" id="SGD:S000002634"/>
<dbReference type="SGD" id="S000002634">
    <property type="gene designation" value="ADK1"/>
</dbReference>
<dbReference type="VEuPathDB" id="FungiDB:YDR226W"/>
<dbReference type="eggNOG" id="KOG3078">
    <property type="taxonomic scope" value="Eukaryota"/>
</dbReference>
<dbReference type="GeneTree" id="ENSGT00940000154576"/>
<dbReference type="HOGENOM" id="CLU_032354_1_0_1"/>
<dbReference type="InParanoid" id="P07170"/>
<dbReference type="OMA" id="VYHEQTA"/>
<dbReference type="OrthoDB" id="439792at2759"/>
<dbReference type="BioCyc" id="MetaCyc:YDR226W-MONOMER"/>
<dbReference type="BioCyc" id="YEAST:YDR226W-MONOMER"/>
<dbReference type="Reactome" id="R-SCE-499943">
    <property type="pathway name" value="Interconversion of nucleotide di- and triphosphates"/>
</dbReference>
<dbReference type="SABIO-RK" id="P07170"/>
<dbReference type="BioGRID-ORCS" id="851812">
    <property type="hits" value="10 hits in 10 CRISPR screens"/>
</dbReference>
<dbReference type="EvolutionaryTrace" id="P07170"/>
<dbReference type="PRO" id="PR:P07170"/>
<dbReference type="Proteomes" id="UP000002311">
    <property type="component" value="Chromosome IV"/>
</dbReference>
<dbReference type="RNAct" id="P07170">
    <property type="molecule type" value="protein"/>
</dbReference>
<dbReference type="GO" id="GO:0005737">
    <property type="term" value="C:cytoplasm"/>
    <property type="evidence" value="ECO:0000314"/>
    <property type="project" value="SGD"/>
</dbReference>
<dbReference type="GO" id="GO:0005829">
    <property type="term" value="C:cytosol"/>
    <property type="evidence" value="ECO:0000314"/>
    <property type="project" value="UniProtKB"/>
</dbReference>
<dbReference type="GO" id="GO:0005758">
    <property type="term" value="C:mitochondrial intermembrane space"/>
    <property type="evidence" value="ECO:0000314"/>
    <property type="project" value="SGD"/>
</dbReference>
<dbReference type="GO" id="GO:0005739">
    <property type="term" value="C:mitochondrion"/>
    <property type="evidence" value="ECO:0007005"/>
    <property type="project" value="SGD"/>
</dbReference>
<dbReference type="GO" id="GO:0004017">
    <property type="term" value="F:adenylate kinase activity"/>
    <property type="evidence" value="ECO:0000314"/>
    <property type="project" value="SGD"/>
</dbReference>
<dbReference type="GO" id="GO:0016208">
    <property type="term" value="F:AMP binding"/>
    <property type="evidence" value="ECO:0000314"/>
    <property type="project" value="UniProtKB"/>
</dbReference>
<dbReference type="GO" id="GO:0005524">
    <property type="term" value="F:ATP binding"/>
    <property type="evidence" value="ECO:0000314"/>
    <property type="project" value="UniProtKB"/>
</dbReference>
<dbReference type="GO" id="GO:0003688">
    <property type="term" value="F:DNA replication origin binding"/>
    <property type="evidence" value="ECO:0000314"/>
    <property type="project" value="SGD"/>
</dbReference>
<dbReference type="GO" id="GO:0006172">
    <property type="term" value="P:ADP biosynthetic process"/>
    <property type="evidence" value="ECO:0000314"/>
    <property type="project" value="SGD"/>
</dbReference>
<dbReference type="GO" id="GO:0046033">
    <property type="term" value="P:AMP metabolic process"/>
    <property type="evidence" value="ECO:0007669"/>
    <property type="project" value="UniProtKB-UniRule"/>
</dbReference>
<dbReference type="GO" id="GO:0046034">
    <property type="term" value="P:ATP metabolic process"/>
    <property type="evidence" value="ECO:0007669"/>
    <property type="project" value="UniProtKB-UniRule"/>
</dbReference>
<dbReference type="GO" id="GO:0006270">
    <property type="term" value="P:DNA replication initiation"/>
    <property type="evidence" value="ECO:0000315"/>
    <property type="project" value="SGD"/>
</dbReference>
<dbReference type="GO" id="GO:0009117">
    <property type="term" value="P:nucleotide metabolic process"/>
    <property type="evidence" value="ECO:0000315"/>
    <property type="project" value="SGD"/>
</dbReference>
<dbReference type="GO" id="GO:0036388">
    <property type="term" value="P:pre-replicative complex assembly"/>
    <property type="evidence" value="ECO:0000315"/>
    <property type="project" value="SGD"/>
</dbReference>
<dbReference type="CDD" id="cd01428">
    <property type="entry name" value="ADK"/>
    <property type="match status" value="1"/>
</dbReference>
<dbReference type="FunFam" id="3.40.50.300:FF:000106">
    <property type="entry name" value="Adenylate kinase mitochondrial"/>
    <property type="match status" value="1"/>
</dbReference>
<dbReference type="Gene3D" id="3.40.50.300">
    <property type="entry name" value="P-loop containing nucleotide triphosphate hydrolases"/>
    <property type="match status" value="1"/>
</dbReference>
<dbReference type="HAMAP" id="MF_00235">
    <property type="entry name" value="Adenylate_kinase_Adk"/>
    <property type="match status" value="1"/>
</dbReference>
<dbReference type="HAMAP" id="MF_03168">
    <property type="entry name" value="Adenylate_kinase_AK2"/>
    <property type="match status" value="1"/>
</dbReference>
<dbReference type="InterPro" id="IPR006259">
    <property type="entry name" value="Adenyl_kin_sub"/>
</dbReference>
<dbReference type="InterPro" id="IPR000850">
    <property type="entry name" value="Adenylat/UMP-CMP_kin"/>
</dbReference>
<dbReference type="InterPro" id="IPR033690">
    <property type="entry name" value="Adenylat_kinase_CS"/>
</dbReference>
<dbReference type="InterPro" id="IPR007862">
    <property type="entry name" value="Adenylate_kinase_lid-dom"/>
</dbReference>
<dbReference type="InterPro" id="IPR028587">
    <property type="entry name" value="AK2"/>
</dbReference>
<dbReference type="InterPro" id="IPR027417">
    <property type="entry name" value="P-loop_NTPase"/>
</dbReference>
<dbReference type="NCBIfam" id="TIGR01351">
    <property type="entry name" value="adk"/>
    <property type="match status" value="1"/>
</dbReference>
<dbReference type="NCBIfam" id="NF001380">
    <property type="entry name" value="PRK00279.1-2"/>
    <property type="match status" value="1"/>
</dbReference>
<dbReference type="NCBIfam" id="NF001381">
    <property type="entry name" value="PRK00279.1-3"/>
    <property type="match status" value="1"/>
</dbReference>
<dbReference type="NCBIfam" id="NF011100">
    <property type="entry name" value="PRK14527.1"/>
    <property type="match status" value="1"/>
</dbReference>
<dbReference type="PANTHER" id="PTHR23359">
    <property type="entry name" value="NUCLEOTIDE KINASE"/>
    <property type="match status" value="1"/>
</dbReference>
<dbReference type="Pfam" id="PF00406">
    <property type="entry name" value="ADK"/>
    <property type="match status" value="1"/>
</dbReference>
<dbReference type="Pfam" id="PF05191">
    <property type="entry name" value="ADK_lid"/>
    <property type="match status" value="1"/>
</dbReference>
<dbReference type="PRINTS" id="PR00094">
    <property type="entry name" value="ADENYLTKNASE"/>
</dbReference>
<dbReference type="SUPFAM" id="SSF52540">
    <property type="entry name" value="P-loop containing nucleoside triphosphate hydrolases"/>
    <property type="match status" value="1"/>
</dbReference>
<dbReference type="PROSITE" id="PS00113">
    <property type="entry name" value="ADENYLATE_KINASE"/>
    <property type="match status" value="1"/>
</dbReference>